<evidence type="ECO:0000255" key="1">
    <source>
        <dbReference type="HAMAP-Rule" id="MF_00528"/>
    </source>
</evidence>
<gene>
    <name type="ordered locus">AZOSEA22460</name>
    <name type="ORF">ebA3966</name>
</gene>
<organism>
    <name type="scientific">Aromatoleum aromaticum (strain DSM 19018 / LMG 30748 / EbN1)</name>
    <name type="common">Azoarcus sp. (strain EbN1)</name>
    <dbReference type="NCBI Taxonomy" id="76114"/>
    <lineage>
        <taxon>Bacteria</taxon>
        <taxon>Pseudomonadati</taxon>
        <taxon>Pseudomonadota</taxon>
        <taxon>Betaproteobacteria</taxon>
        <taxon>Rhodocyclales</taxon>
        <taxon>Rhodocyclaceae</taxon>
        <taxon>Aromatoleum</taxon>
    </lineage>
</organism>
<comment type="function">
    <text evidence="1">Nucleoside triphosphate pyrophosphatase that hydrolyzes dTTP and UTP. May have a dual role in cell division arrest and in preventing the incorporation of modified nucleotides into cellular nucleic acids.</text>
</comment>
<comment type="catalytic activity">
    <reaction evidence="1">
        <text>dTTP + H2O = dTMP + diphosphate + H(+)</text>
        <dbReference type="Rhea" id="RHEA:28534"/>
        <dbReference type="ChEBI" id="CHEBI:15377"/>
        <dbReference type="ChEBI" id="CHEBI:15378"/>
        <dbReference type="ChEBI" id="CHEBI:33019"/>
        <dbReference type="ChEBI" id="CHEBI:37568"/>
        <dbReference type="ChEBI" id="CHEBI:63528"/>
        <dbReference type="EC" id="3.6.1.9"/>
    </reaction>
</comment>
<comment type="catalytic activity">
    <reaction evidence="1">
        <text>UTP + H2O = UMP + diphosphate + H(+)</text>
        <dbReference type="Rhea" id="RHEA:29395"/>
        <dbReference type="ChEBI" id="CHEBI:15377"/>
        <dbReference type="ChEBI" id="CHEBI:15378"/>
        <dbReference type="ChEBI" id="CHEBI:33019"/>
        <dbReference type="ChEBI" id="CHEBI:46398"/>
        <dbReference type="ChEBI" id="CHEBI:57865"/>
        <dbReference type="EC" id="3.6.1.9"/>
    </reaction>
</comment>
<comment type="cofactor">
    <cofactor evidence="1">
        <name>a divalent metal cation</name>
        <dbReference type="ChEBI" id="CHEBI:60240"/>
    </cofactor>
</comment>
<comment type="subcellular location">
    <subcellularLocation>
        <location evidence="1">Cytoplasm</location>
    </subcellularLocation>
</comment>
<comment type="similarity">
    <text evidence="1">Belongs to the Maf family. YhdE subfamily.</text>
</comment>
<name>NTPPA_AROAE</name>
<keyword id="KW-0963">Cytoplasm</keyword>
<keyword id="KW-0378">Hydrolase</keyword>
<keyword id="KW-0546">Nucleotide metabolism</keyword>
<keyword id="KW-1185">Reference proteome</keyword>
<accession>Q5P2U3</accession>
<proteinExistence type="inferred from homology"/>
<feature type="chain" id="PRO_0000267246" description="dTTP/UTP pyrophosphatase">
    <location>
        <begin position="1"/>
        <end position="206"/>
    </location>
</feature>
<feature type="active site" description="Proton acceptor" evidence="1">
    <location>
        <position position="87"/>
    </location>
</feature>
<feature type="site" description="Important for substrate specificity" evidence="1">
    <location>
        <position position="16"/>
    </location>
</feature>
<feature type="site" description="Important for substrate specificity" evidence="1">
    <location>
        <position position="88"/>
    </location>
</feature>
<feature type="site" description="Important for substrate specificity" evidence="1">
    <location>
        <position position="170"/>
    </location>
</feature>
<dbReference type="EC" id="3.6.1.9" evidence="1"/>
<dbReference type="EMBL" id="CR555306">
    <property type="protein sequence ID" value="CAI08371.1"/>
    <property type="molecule type" value="Genomic_DNA"/>
</dbReference>
<dbReference type="RefSeq" id="WP_011238059.1">
    <property type="nucleotide sequence ID" value="NC_006513.1"/>
</dbReference>
<dbReference type="SMR" id="Q5P2U3"/>
<dbReference type="STRING" id="76114.ebA3966"/>
<dbReference type="KEGG" id="eba:ebA3966"/>
<dbReference type="eggNOG" id="COG0424">
    <property type="taxonomic scope" value="Bacteria"/>
</dbReference>
<dbReference type="HOGENOM" id="CLU_040416_2_1_4"/>
<dbReference type="OrthoDB" id="9807767at2"/>
<dbReference type="Proteomes" id="UP000006552">
    <property type="component" value="Chromosome"/>
</dbReference>
<dbReference type="GO" id="GO:0005737">
    <property type="term" value="C:cytoplasm"/>
    <property type="evidence" value="ECO:0007669"/>
    <property type="project" value="UniProtKB-SubCell"/>
</dbReference>
<dbReference type="GO" id="GO:0036218">
    <property type="term" value="F:dTTP diphosphatase activity"/>
    <property type="evidence" value="ECO:0007669"/>
    <property type="project" value="RHEA"/>
</dbReference>
<dbReference type="GO" id="GO:0036221">
    <property type="term" value="F:UTP diphosphatase activity"/>
    <property type="evidence" value="ECO:0007669"/>
    <property type="project" value="RHEA"/>
</dbReference>
<dbReference type="GO" id="GO:0009117">
    <property type="term" value="P:nucleotide metabolic process"/>
    <property type="evidence" value="ECO:0007669"/>
    <property type="project" value="UniProtKB-KW"/>
</dbReference>
<dbReference type="CDD" id="cd00555">
    <property type="entry name" value="Maf"/>
    <property type="match status" value="1"/>
</dbReference>
<dbReference type="Gene3D" id="3.90.950.10">
    <property type="match status" value="1"/>
</dbReference>
<dbReference type="HAMAP" id="MF_00528">
    <property type="entry name" value="Maf"/>
    <property type="match status" value="1"/>
</dbReference>
<dbReference type="InterPro" id="IPR029001">
    <property type="entry name" value="ITPase-like_fam"/>
</dbReference>
<dbReference type="InterPro" id="IPR003697">
    <property type="entry name" value="Maf-like"/>
</dbReference>
<dbReference type="NCBIfam" id="TIGR00172">
    <property type="entry name" value="maf"/>
    <property type="match status" value="1"/>
</dbReference>
<dbReference type="PANTHER" id="PTHR43213">
    <property type="entry name" value="BIFUNCTIONAL DTTP/UTP PYROPHOSPHATASE/METHYLTRANSFERASE PROTEIN-RELATED"/>
    <property type="match status" value="1"/>
</dbReference>
<dbReference type="PANTHER" id="PTHR43213:SF5">
    <property type="entry name" value="BIFUNCTIONAL DTTP_UTP PYROPHOSPHATASE_METHYLTRANSFERASE PROTEIN-RELATED"/>
    <property type="match status" value="1"/>
</dbReference>
<dbReference type="Pfam" id="PF02545">
    <property type="entry name" value="Maf"/>
    <property type="match status" value="1"/>
</dbReference>
<dbReference type="PIRSF" id="PIRSF006305">
    <property type="entry name" value="Maf"/>
    <property type="match status" value="1"/>
</dbReference>
<dbReference type="SUPFAM" id="SSF52972">
    <property type="entry name" value="ITPase-like"/>
    <property type="match status" value="1"/>
</dbReference>
<protein>
    <recommendedName>
        <fullName evidence="1">dTTP/UTP pyrophosphatase</fullName>
        <shortName evidence="1">dTTPase/UTPase</shortName>
        <ecNumber evidence="1">3.6.1.9</ecNumber>
    </recommendedName>
    <alternativeName>
        <fullName evidence="1">Nucleoside triphosphate pyrophosphatase</fullName>
    </alternativeName>
    <alternativeName>
        <fullName evidence="1">Nucleotide pyrophosphatase</fullName>
        <shortName evidence="1">Nucleotide PPase</shortName>
    </alternativeName>
</protein>
<reference key="1">
    <citation type="journal article" date="2005" name="Arch. Microbiol.">
        <title>The genome sequence of an anaerobic aromatic-degrading denitrifying bacterium, strain EbN1.</title>
        <authorList>
            <person name="Rabus R."/>
            <person name="Kube M."/>
            <person name="Heider J."/>
            <person name="Beck A."/>
            <person name="Heitmann K."/>
            <person name="Widdel F."/>
            <person name="Reinhardt R."/>
        </authorList>
    </citation>
    <scope>NUCLEOTIDE SEQUENCE [LARGE SCALE GENOMIC DNA]</scope>
    <source>
        <strain>DSM 19018 / LMG 30748 / EbN1</strain>
    </source>
</reference>
<sequence length="206" mass="22859">MKPIQARIYLASRSPRRRELLRQIGVQFELLAFRGGERGKDADVDETPHPGEPVERYVERLALTKAEAGCRRLQWRSLPHHAVLGADTTLELEGQIIGKPVDASDAAAILHQLSGRTHRVLTAVALSDGSRTRSRTSISEVRFRPLDDDEIRHYVATGEPMDKAGAYGIQGRAALFIEEIRGSYTGIMGLPLFETAQLLESFGYPL</sequence>